<sequence>MLTAHKITVLINIFFIFSNYNNIKAHLVSYPSLTSLYGTSLKYFSVGILFTSNPIIFIIFVYSIRESFYSIFSSLVSGMLSIIISEAILFITYFWGILHFSLSPYPLYNEGIILTSSRMLILTITFILASASCMTACLQFLIEKGMSLEISSIVFIIYLLGECFASLQTTEYLHLGYCINDAISGTLFYCVTGLHFSHVIVGLLLLLIYFIRIVEMYDTNSEWSYSLYGISYIVLPHTDQITILYWHFVEIVWLFIEYFFYSE</sequence>
<gene>
    <name type="primary">COIII</name>
</gene>
<name>COX3_PLAVI</name>
<keyword id="KW-0472">Membrane</keyword>
<keyword id="KW-0496">Mitochondrion</keyword>
<keyword id="KW-0999">Mitochondrion inner membrane</keyword>
<keyword id="KW-1278">Translocase</keyword>
<keyword id="KW-0812">Transmembrane</keyword>
<keyword id="KW-1133">Transmembrane helix</keyword>
<protein>
    <recommendedName>
        <fullName>Cytochrome c oxidase subunit 3</fullName>
        <ecNumber>7.1.1.9</ecNumber>
    </recommendedName>
    <alternativeName>
        <fullName>Cytochrome c oxidase polypeptide III</fullName>
    </alternativeName>
</protein>
<evidence type="ECO:0000250" key="1">
    <source>
        <dbReference type="UniProtKB" id="P00420"/>
    </source>
</evidence>
<evidence type="ECO:0000255" key="2"/>
<evidence type="ECO:0000305" key="3"/>
<feature type="chain" id="PRO_0000183834" description="Cytochrome c oxidase subunit 3">
    <location>
        <begin position="1"/>
        <end position="263"/>
    </location>
</feature>
<feature type="transmembrane region" description="Helical" evidence="2">
    <location>
        <begin position="7"/>
        <end position="27"/>
    </location>
</feature>
<feature type="transmembrane region" description="Helical" evidence="2">
    <location>
        <begin position="44"/>
        <end position="64"/>
    </location>
</feature>
<feature type="transmembrane region" description="Helical" evidence="2">
    <location>
        <begin position="78"/>
        <end position="98"/>
    </location>
</feature>
<feature type="transmembrane region" description="Helical" evidence="2">
    <location>
        <begin position="120"/>
        <end position="140"/>
    </location>
</feature>
<feature type="transmembrane region" description="Helical" evidence="2">
    <location>
        <begin position="145"/>
        <end position="165"/>
    </location>
</feature>
<feature type="transmembrane region" description="Helical" evidence="2">
    <location>
        <begin position="191"/>
        <end position="211"/>
    </location>
</feature>
<feature type="transmembrane region" description="Helical" evidence="2">
    <location>
        <begin position="241"/>
        <end position="261"/>
    </location>
</feature>
<reference key="1">
    <citation type="journal article" date="1996" name="Kisechugaku Zasshi">
        <title>Cytochrome c oxidase III (COIII) gene of Plasmodium vivax: complete coding sequence and its expression in the erythhrocytic stages of the parasite.</title>
        <authorList>
            <person name="Lim P.K.C."/>
            <person name="Kita K."/>
            <person name="Tan S.K."/>
            <person name="Furuta T."/>
            <person name="Kojima S."/>
            <person name="Aoki T."/>
            <person name="Watanabe Y."/>
            <person name="Mak J.W."/>
        </authorList>
    </citation>
    <scope>NUCLEOTIDE SEQUENCE [GENOMIC DNA]</scope>
</reference>
<comment type="function">
    <text evidence="1">Component of the cytochrome c oxidase, the last enzyme in the mitochondrial electron transport chain which drives oxidative phosphorylation. The respiratory chain contains 3 multisubunit complexes succinate dehydrogenase (complex II, CII), ubiquinol-cytochrome c oxidoreductase (cytochrome b-c1 complex, complex III, CIII) and cytochrome c oxidase (complex IV, CIV), that cooperate to transfer electrons derived from NADH and succinate to molecular oxygen, creating an electrochemical gradient over the inner membrane that drives transmembrane transport and the ATP synthase. Cytochrome c oxidase is the component of the respiratory chain that catalyzes the reduction of oxygen to water. Electrons originating from reduced cytochrome c in the intermembrane space (IMS) are transferred via the dinuclear copper A center (CU(A)) of subunit 2 and heme A of subunit 1 to the active site in subunit 1, a binuclear center (BNC) formed by heme A3 and copper B (CU(B)). The BNC reduces molecular oxygen to 2 water molecules using 4 electrons from cytochrome c in the IMS and 4 protons from the mitochondrial matrix.</text>
</comment>
<comment type="catalytic activity">
    <reaction evidence="1">
        <text>4 Fe(II)-[cytochrome c] + O2 + 8 H(+)(in) = 4 Fe(III)-[cytochrome c] + 2 H2O + 4 H(+)(out)</text>
        <dbReference type="Rhea" id="RHEA:11436"/>
        <dbReference type="Rhea" id="RHEA-COMP:10350"/>
        <dbReference type="Rhea" id="RHEA-COMP:14399"/>
        <dbReference type="ChEBI" id="CHEBI:15377"/>
        <dbReference type="ChEBI" id="CHEBI:15378"/>
        <dbReference type="ChEBI" id="CHEBI:15379"/>
        <dbReference type="ChEBI" id="CHEBI:29033"/>
        <dbReference type="ChEBI" id="CHEBI:29034"/>
        <dbReference type="EC" id="7.1.1.9"/>
    </reaction>
    <physiologicalReaction direction="left-to-right" evidence="1">
        <dbReference type="Rhea" id="RHEA:11437"/>
    </physiologicalReaction>
</comment>
<comment type="subunit">
    <text evidence="1">Component of the cytochrome c oxidase (complex IV, CIV), a multisubunit enzyme composed of a catalytic core of 3 subunits and several supernumerary subunits. The complex exists as a monomer or a dimer and forms supercomplexes (SCs) in the inner mitochondrial membrane with ubiquinol-cytochrome c oxidoreductase (cytochrome b-c1 complex, complex III, CIII).</text>
</comment>
<comment type="subcellular location">
    <subcellularLocation>
        <location evidence="1">Mitochondrion inner membrane</location>
        <topology evidence="1">Multi-pass membrane protein</topology>
    </subcellularLocation>
</comment>
<comment type="similarity">
    <text evidence="3">Belongs to the cytochrome c oxidase subunit 3 family.</text>
</comment>
<geneLocation type="mitochondrion"/>
<accession>Q36675</accession>
<proteinExistence type="inferred from homology"/>
<dbReference type="EC" id="7.1.1.9"/>
<dbReference type="EMBL" id="D82020">
    <property type="protein sequence ID" value="BAA11509.1"/>
    <property type="molecule type" value="Genomic_DNA"/>
</dbReference>
<dbReference type="SMR" id="Q36675"/>
<dbReference type="VEuPathDB" id="PlasmoDB:PVAD80_MIT0001"/>
<dbReference type="VEuPathDB" id="PlasmoDB:PVP01_MIT02700"/>
<dbReference type="VEuPathDB" id="PlasmoDB:PVPAM_MIT0005000"/>
<dbReference type="GO" id="GO:0005743">
    <property type="term" value="C:mitochondrial inner membrane"/>
    <property type="evidence" value="ECO:0007669"/>
    <property type="project" value="UniProtKB-SubCell"/>
</dbReference>
<dbReference type="GO" id="GO:0004129">
    <property type="term" value="F:cytochrome-c oxidase activity"/>
    <property type="evidence" value="ECO:0007669"/>
    <property type="project" value="UniProtKB-EC"/>
</dbReference>
<dbReference type="GO" id="GO:0006123">
    <property type="term" value="P:mitochondrial electron transport, cytochrome c to oxygen"/>
    <property type="evidence" value="ECO:0007669"/>
    <property type="project" value="TreeGrafter"/>
</dbReference>
<dbReference type="CDD" id="cd00386">
    <property type="entry name" value="Heme_Cu_Oxidase_III_like"/>
    <property type="match status" value="1"/>
</dbReference>
<dbReference type="Gene3D" id="1.20.120.80">
    <property type="entry name" value="Cytochrome c oxidase, subunit III, four-helix bundle"/>
    <property type="match status" value="1"/>
</dbReference>
<dbReference type="InterPro" id="IPR024791">
    <property type="entry name" value="Cyt_c/ubiquinol_Oxase_su3"/>
</dbReference>
<dbReference type="InterPro" id="IPR000298">
    <property type="entry name" value="Cyt_c_oxidase-like_su3"/>
</dbReference>
<dbReference type="InterPro" id="IPR035973">
    <property type="entry name" value="Cyt_c_oxidase_su3-like_sf"/>
</dbReference>
<dbReference type="InterPro" id="IPR013833">
    <property type="entry name" value="Cyt_c_oxidase_su3_a-hlx"/>
</dbReference>
<dbReference type="PANTHER" id="PTHR11403:SF7">
    <property type="entry name" value="CYTOCHROME C OXIDASE SUBUNIT 3"/>
    <property type="match status" value="1"/>
</dbReference>
<dbReference type="PANTHER" id="PTHR11403">
    <property type="entry name" value="CYTOCHROME C OXIDASE SUBUNIT III"/>
    <property type="match status" value="1"/>
</dbReference>
<dbReference type="Pfam" id="PF00510">
    <property type="entry name" value="COX3"/>
    <property type="match status" value="1"/>
</dbReference>
<dbReference type="SUPFAM" id="SSF81452">
    <property type="entry name" value="Cytochrome c oxidase subunit III-like"/>
    <property type="match status" value="1"/>
</dbReference>
<dbReference type="PROSITE" id="PS50253">
    <property type="entry name" value="COX3"/>
    <property type="match status" value="1"/>
</dbReference>
<organism>
    <name type="scientific">Plasmodium vivax</name>
    <dbReference type="NCBI Taxonomy" id="5855"/>
    <lineage>
        <taxon>Eukaryota</taxon>
        <taxon>Sar</taxon>
        <taxon>Alveolata</taxon>
        <taxon>Apicomplexa</taxon>
        <taxon>Aconoidasida</taxon>
        <taxon>Haemosporida</taxon>
        <taxon>Plasmodiidae</taxon>
        <taxon>Plasmodium</taxon>
        <taxon>Plasmodium (Plasmodium)</taxon>
    </lineage>
</organism>